<gene>
    <name evidence="1" type="primary">rpsN</name>
    <name type="ordered locus">RPA3237</name>
</gene>
<protein>
    <recommendedName>
        <fullName evidence="1">Small ribosomal subunit protein uS14</fullName>
    </recommendedName>
    <alternativeName>
        <fullName evidence="4">30S ribosomal protein S14</fullName>
    </alternativeName>
    <alternativeName>
        <fullName>RRP-S14</fullName>
    </alternativeName>
</protein>
<organism>
    <name type="scientific">Rhodopseudomonas palustris (strain ATCC BAA-98 / CGA009)</name>
    <dbReference type="NCBI Taxonomy" id="258594"/>
    <lineage>
        <taxon>Bacteria</taxon>
        <taxon>Pseudomonadati</taxon>
        <taxon>Pseudomonadota</taxon>
        <taxon>Alphaproteobacteria</taxon>
        <taxon>Hyphomicrobiales</taxon>
        <taxon>Nitrobacteraceae</taxon>
        <taxon>Rhodopseudomonas</taxon>
    </lineage>
</organism>
<evidence type="ECO:0000255" key="1">
    <source>
        <dbReference type="HAMAP-Rule" id="MF_00537"/>
    </source>
</evidence>
<evidence type="ECO:0000256" key="2">
    <source>
        <dbReference type="SAM" id="MobiDB-lite"/>
    </source>
</evidence>
<evidence type="ECO:0000269" key="3">
    <source>
    </source>
</evidence>
<evidence type="ECO:0000305" key="4"/>
<accession>Q6N4U6</accession>
<comment type="function">
    <text evidence="1">Binds 16S rRNA, required for the assembly of 30S particles and may also be responsible for determining the conformation of the 16S rRNA at the A site.</text>
</comment>
<comment type="subunit">
    <text evidence="1">Part of the 30S ribosomal subunit. Contacts proteins S3 and S10.</text>
</comment>
<comment type="mass spectrometry"/>
<comment type="similarity">
    <text evidence="1">Belongs to the universal ribosomal protein uS14 family.</text>
</comment>
<proteinExistence type="evidence at protein level"/>
<sequence>MAKKSAIEKNNRRKKMTKNAAPKRARLKAIIADKSKPMEERFAATLKLAEMPRNSSATRIRNRCDLTGRPRSVYRLNKLSRIAIRDLGSRGLVLGLVKSSW</sequence>
<feature type="initiator methionine" description="Removed">
    <location>
        <position position="1"/>
    </location>
</feature>
<feature type="chain" id="PRO_0000224166" description="Small ribosomal subunit protein uS14">
    <location>
        <begin position="2"/>
        <end position="101"/>
    </location>
</feature>
<feature type="region of interest" description="Disordered" evidence="2">
    <location>
        <begin position="1"/>
        <end position="23"/>
    </location>
</feature>
<feature type="compositionally biased region" description="Basic and acidic residues" evidence="2">
    <location>
        <begin position="1"/>
        <end position="10"/>
    </location>
</feature>
<feature type="compositionally biased region" description="Basic residues" evidence="2">
    <location>
        <begin position="11"/>
        <end position="23"/>
    </location>
</feature>
<dbReference type="EMBL" id="BX572603">
    <property type="protein sequence ID" value="CAE28678.1"/>
    <property type="molecule type" value="Genomic_DNA"/>
</dbReference>
<dbReference type="RefSeq" id="WP_011158782.1">
    <property type="nucleotide sequence ID" value="NZ_CP116810.1"/>
</dbReference>
<dbReference type="SMR" id="Q6N4U6"/>
<dbReference type="IntAct" id="Q6N4U6">
    <property type="interactions" value="1"/>
</dbReference>
<dbReference type="STRING" id="258594.RPA3237"/>
<dbReference type="GeneID" id="66894323"/>
<dbReference type="eggNOG" id="COG0199">
    <property type="taxonomic scope" value="Bacteria"/>
</dbReference>
<dbReference type="HOGENOM" id="CLU_139869_0_1_5"/>
<dbReference type="PhylomeDB" id="Q6N4U6"/>
<dbReference type="GO" id="GO:0005737">
    <property type="term" value="C:cytoplasm"/>
    <property type="evidence" value="ECO:0007669"/>
    <property type="project" value="UniProtKB-ARBA"/>
</dbReference>
<dbReference type="GO" id="GO:0015935">
    <property type="term" value="C:small ribosomal subunit"/>
    <property type="evidence" value="ECO:0007669"/>
    <property type="project" value="TreeGrafter"/>
</dbReference>
<dbReference type="GO" id="GO:0019843">
    <property type="term" value="F:rRNA binding"/>
    <property type="evidence" value="ECO:0007669"/>
    <property type="project" value="UniProtKB-UniRule"/>
</dbReference>
<dbReference type="GO" id="GO:0003735">
    <property type="term" value="F:structural constituent of ribosome"/>
    <property type="evidence" value="ECO:0007669"/>
    <property type="project" value="InterPro"/>
</dbReference>
<dbReference type="GO" id="GO:0006412">
    <property type="term" value="P:translation"/>
    <property type="evidence" value="ECO:0007669"/>
    <property type="project" value="UniProtKB-UniRule"/>
</dbReference>
<dbReference type="FunFam" id="1.10.287.1480:FF:000001">
    <property type="entry name" value="30S ribosomal protein S14"/>
    <property type="match status" value="1"/>
</dbReference>
<dbReference type="Gene3D" id="1.10.287.1480">
    <property type="match status" value="1"/>
</dbReference>
<dbReference type="HAMAP" id="MF_00537">
    <property type="entry name" value="Ribosomal_uS14_1"/>
    <property type="match status" value="1"/>
</dbReference>
<dbReference type="InterPro" id="IPR001209">
    <property type="entry name" value="Ribosomal_uS14"/>
</dbReference>
<dbReference type="InterPro" id="IPR023036">
    <property type="entry name" value="Ribosomal_uS14_bac/plastid"/>
</dbReference>
<dbReference type="NCBIfam" id="NF006477">
    <property type="entry name" value="PRK08881.1"/>
    <property type="match status" value="1"/>
</dbReference>
<dbReference type="PANTHER" id="PTHR19836">
    <property type="entry name" value="30S RIBOSOMAL PROTEIN S14"/>
    <property type="match status" value="1"/>
</dbReference>
<dbReference type="PANTHER" id="PTHR19836:SF19">
    <property type="entry name" value="SMALL RIBOSOMAL SUBUNIT PROTEIN US14M"/>
    <property type="match status" value="1"/>
</dbReference>
<dbReference type="Pfam" id="PF00253">
    <property type="entry name" value="Ribosomal_S14"/>
    <property type="match status" value="1"/>
</dbReference>
<dbReference type="SUPFAM" id="SSF57716">
    <property type="entry name" value="Glucocorticoid receptor-like (DNA-binding domain)"/>
    <property type="match status" value="1"/>
</dbReference>
<reference key="1">
    <citation type="journal article" date="2004" name="Nat. Biotechnol.">
        <title>Complete genome sequence of the metabolically versatile photosynthetic bacterium Rhodopseudomonas palustris.</title>
        <authorList>
            <person name="Larimer F.W."/>
            <person name="Chain P."/>
            <person name="Hauser L."/>
            <person name="Lamerdin J.E."/>
            <person name="Malfatti S."/>
            <person name="Do L."/>
            <person name="Land M.L."/>
            <person name="Pelletier D.A."/>
            <person name="Beatty J.T."/>
            <person name="Lang A.S."/>
            <person name="Tabita F.R."/>
            <person name="Gibson J.L."/>
            <person name="Hanson T.E."/>
            <person name="Bobst C."/>
            <person name="Torres y Torres J.L."/>
            <person name="Peres C."/>
            <person name="Harrison F.H."/>
            <person name="Gibson J."/>
            <person name="Harwood C.S."/>
        </authorList>
    </citation>
    <scope>NUCLEOTIDE SEQUENCE [LARGE SCALE GENOMIC DNA]</scope>
    <source>
        <strain>ATCC BAA-98 / CGA009</strain>
    </source>
</reference>
<reference key="2">
    <citation type="journal article" date="2004" name="J. Proteome Res.">
        <title>Characterization of the 70S ribosome from Rhodopseudomonas palustris using an integrated 'top-down' and 'bottom-up' mass spectrometric approach.</title>
        <authorList>
            <person name="Strader M.B."/>
            <person name="VerBerkmoes N.C."/>
            <person name="Tabb D.L."/>
            <person name="Connelly H.M."/>
            <person name="Barton J.W."/>
            <person name="Bruce B.D."/>
            <person name="Pelletier D.A."/>
            <person name="Davison B.H."/>
            <person name="Hettich R.L."/>
            <person name="Larimer F.W."/>
            <person name="Hurst G.B."/>
        </authorList>
    </citation>
    <scope>MASS SPECTROMETRY</scope>
    <source>
        <strain>ATCC BAA-98 / CGA009</strain>
    </source>
</reference>
<keyword id="KW-0687">Ribonucleoprotein</keyword>
<keyword id="KW-0689">Ribosomal protein</keyword>
<keyword id="KW-0694">RNA-binding</keyword>
<keyword id="KW-0699">rRNA-binding</keyword>
<name>RS14_RHOPA</name>